<sequence>MVLSDIEIANSVTMEPISKVADQLGIDKEALCLYGKYKAKIDARQLVALKNKPDGKLILVTAISPTPAGEGKTTTSVGLVDALSAIGKKAVIALREPSLGPVFGVKGGAAGGGHAQVVPMEDINLHFTGDFHAIGVANNLLAALIDNHIHHGNSLGIDSRRITWKRVVDMNDRQLRHIVDGLQGKVNGVPREDGYDITVASEIMAILCLSENISDLKAHLEKIIIGYNFQGEPVTAKDLKAGGALAALLKDAIHPNLVQTLEHTPALIHGGPFANIAHGCNSVLATKLALKYGDYAVTEAGFGADLGAEKFIDIKCRMSGLRPAAVVLVATIRALKMHGGVPKADLATENVQAVVDGLPNLDKHLANIQDVYGLPVVVAINKFPLDTDAELQAVYDACDKRGVDVVISDVWANGGAGGRELAEKVVALAEQDNQFRFVYNEDDSIETKLTKIVTKVYGGKGIKLTPTAKRELAELERLGFGNYPICMAKTQYSFSDDAKKLGAPTDFIVTISNLKVSAGAGFIVALTGAIMTMPGLPKVPASETIDIDEEGNITGLF</sequence>
<comment type="catalytic activity">
    <reaction evidence="1">
        <text>(6S)-5,6,7,8-tetrahydrofolate + formate + ATP = (6R)-10-formyltetrahydrofolate + ADP + phosphate</text>
        <dbReference type="Rhea" id="RHEA:20221"/>
        <dbReference type="ChEBI" id="CHEBI:15740"/>
        <dbReference type="ChEBI" id="CHEBI:30616"/>
        <dbReference type="ChEBI" id="CHEBI:43474"/>
        <dbReference type="ChEBI" id="CHEBI:57453"/>
        <dbReference type="ChEBI" id="CHEBI:195366"/>
        <dbReference type="ChEBI" id="CHEBI:456216"/>
        <dbReference type="EC" id="6.3.4.3"/>
    </reaction>
</comment>
<comment type="pathway">
    <text evidence="1">One-carbon metabolism; tetrahydrofolate interconversion.</text>
</comment>
<comment type="similarity">
    <text evidence="1">Belongs to the formate--tetrahydrofolate ligase family.</text>
</comment>
<accession>Q1JJK1</accession>
<gene>
    <name evidence="1" type="primary">fhs2</name>
    <name type="ordered locus">MGAS9429_Spy1785</name>
</gene>
<dbReference type="EC" id="6.3.4.3" evidence="1"/>
<dbReference type="EMBL" id="CP000259">
    <property type="protein sequence ID" value="ABF32972.1"/>
    <property type="molecule type" value="Genomic_DNA"/>
</dbReference>
<dbReference type="RefSeq" id="WP_002991315.1">
    <property type="nucleotide sequence ID" value="NC_008021.1"/>
</dbReference>
<dbReference type="SMR" id="Q1JJK1"/>
<dbReference type="KEGG" id="spk:MGAS9429_Spy1785"/>
<dbReference type="HOGENOM" id="CLU_003601_3_3_9"/>
<dbReference type="UniPathway" id="UPA00193"/>
<dbReference type="Proteomes" id="UP000002433">
    <property type="component" value="Chromosome"/>
</dbReference>
<dbReference type="GO" id="GO:0005524">
    <property type="term" value="F:ATP binding"/>
    <property type="evidence" value="ECO:0007669"/>
    <property type="project" value="UniProtKB-UniRule"/>
</dbReference>
<dbReference type="GO" id="GO:0004329">
    <property type="term" value="F:formate-tetrahydrofolate ligase activity"/>
    <property type="evidence" value="ECO:0007669"/>
    <property type="project" value="UniProtKB-UniRule"/>
</dbReference>
<dbReference type="GO" id="GO:0035999">
    <property type="term" value="P:tetrahydrofolate interconversion"/>
    <property type="evidence" value="ECO:0007669"/>
    <property type="project" value="UniProtKB-UniRule"/>
</dbReference>
<dbReference type="CDD" id="cd00477">
    <property type="entry name" value="FTHFS"/>
    <property type="match status" value="1"/>
</dbReference>
<dbReference type="FunFam" id="3.30.1510.10:FF:000001">
    <property type="entry name" value="Formate--tetrahydrofolate ligase"/>
    <property type="match status" value="1"/>
</dbReference>
<dbReference type="FunFam" id="3.10.410.10:FF:000001">
    <property type="entry name" value="Putative formate--tetrahydrofolate ligase"/>
    <property type="match status" value="1"/>
</dbReference>
<dbReference type="Gene3D" id="3.30.1510.10">
    <property type="entry name" value="Domain 2, N(10)-formyltetrahydrofolate synthetase"/>
    <property type="match status" value="1"/>
</dbReference>
<dbReference type="Gene3D" id="3.10.410.10">
    <property type="entry name" value="Formyltetrahydrofolate synthetase, domain 3"/>
    <property type="match status" value="1"/>
</dbReference>
<dbReference type="Gene3D" id="3.40.50.300">
    <property type="entry name" value="P-loop containing nucleotide triphosphate hydrolases"/>
    <property type="match status" value="1"/>
</dbReference>
<dbReference type="HAMAP" id="MF_01543">
    <property type="entry name" value="FTHFS"/>
    <property type="match status" value="1"/>
</dbReference>
<dbReference type="InterPro" id="IPR000559">
    <property type="entry name" value="Formate_THF_ligase"/>
</dbReference>
<dbReference type="InterPro" id="IPR020628">
    <property type="entry name" value="Formate_THF_ligase_CS"/>
</dbReference>
<dbReference type="InterPro" id="IPR027417">
    <property type="entry name" value="P-loop_NTPase"/>
</dbReference>
<dbReference type="NCBIfam" id="NF010030">
    <property type="entry name" value="PRK13505.1"/>
    <property type="match status" value="1"/>
</dbReference>
<dbReference type="Pfam" id="PF01268">
    <property type="entry name" value="FTHFS"/>
    <property type="match status" value="1"/>
</dbReference>
<dbReference type="SUPFAM" id="SSF52540">
    <property type="entry name" value="P-loop containing nucleoside triphosphate hydrolases"/>
    <property type="match status" value="1"/>
</dbReference>
<dbReference type="PROSITE" id="PS00721">
    <property type="entry name" value="FTHFS_1"/>
    <property type="match status" value="1"/>
</dbReference>
<dbReference type="PROSITE" id="PS00722">
    <property type="entry name" value="FTHFS_2"/>
    <property type="match status" value="1"/>
</dbReference>
<name>FTHS2_STRPC</name>
<proteinExistence type="inferred from homology"/>
<reference key="1">
    <citation type="journal article" date="2006" name="Proc. Natl. Acad. Sci. U.S.A.">
        <title>Molecular genetic anatomy of inter- and intraserotype variation in the human bacterial pathogen group A Streptococcus.</title>
        <authorList>
            <person name="Beres S.B."/>
            <person name="Richter E.W."/>
            <person name="Nagiec M.J."/>
            <person name="Sumby P."/>
            <person name="Porcella S.F."/>
            <person name="DeLeo F.R."/>
            <person name="Musser J.M."/>
        </authorList>
    </citation>
    <scope>NUCLEOTIDE SEQUENCE [LARGE SCALE GENOMIC DNA]</scope>
    <source>
        <strain>MGAS9429</strain>
    </source>
</reference>
<keyword id="KW-0067">ATP-binding</keyword>
<keyword id="KW-0436">Ligase</keyword>
<keyword id="KW-0547">Nucleotide-binding</keyword>
<keyword id="KW-0554">One-carbon metabolism</keyword>
<feature type="chain" id="PRO_0000293062" description="Formate--tetrahydrofolate ligase 2">
    <location>
        <begin position="1"/>
        <end position="557"/>
    </location>
</feature>
<feature type="binding site" evidence="1">
    <location>
        <begin position="66"/>
        <end position="73"/>
    </location>
    <ligand>
        <name>ATP</name>
        <dbReference type="ChEBI" id="CHEBI:30616"/>
    </ligand>
</feature>
<protein>
    <recommendedName>
        <fullName evidence="1">Formate--tetrahydrofolate ligase 2</fullName>
        <ecNumber evidence="1">6.3.4.3</ecNumber>
    </recommendedName>
    <alternativeName>
        <fullName evidence="1">Formyltetrahydrofolate synthetase 2</fullName>
        <shortName evidence="1">FHS 2</shortName>
        <shortName evidence="1">FTHFS 2</shortName>
    </alternativeName>
</protein>
<evidence type="ECO:0000255" key="1">
    <source>
        <dbReference type="HAMAP-Rule" id="MF_01543"/>
    </source>
</evidence>
<organism>
    <name type="scientific">Streptococcus pyogenes serotype M12 (strain MGAS9429)</name>
    <dbReference type="NCBI Taxonomy" id="370551"/>
    <lineage>
        <taxon>Bacteria</taxon>
        <taxon>Bacillati</taxon>
        <taxon>Bacillota</taxon>
        <taxon>Bacilli</taxon>
        <taxon>Lactobacillales</taxon>
        <taxon>Streptococcaceae</taxon>
        <taxon>Streptococcus</taxon>
    </lineage>
</organism>